<proteinExistence type="inferred from homology"/>
<sequence>MIEPLLCGIVLGLVPITLLGLFVSAWNQYRRGSGMLDID</sequence>
<gene>
    <name evidence="1" type="primary">petG</name>
    <name type="ordered locus">PMT9312_1069</name>
</gene>
<dbReference type="EMBL" id="CP000111">
    <property type="protein sequence ID" value="ABB50128.1"/>
    <property type="status" value="ALT_INIT"/>
    <property type="molecule type" value="Genomic_DNA"/>
</dbReference>
<dbReference type="RefSeq" id="WP_011376619.1">
    <property type="nucleotide sequence ID" value="NC_007577.1"/>
</dbReference>
<dbReference type="SMR" id="Q31AG7"/>
<dbReference type="STRING" id="74546.PMT9312_1069"/>
<dbReference type="KEGG" id="pmi:PMT9312_1069"/>
<dbReference type="eggNOG" id="ENOG502ZI4F">
    <property type="taxonomic scope" value="Bacteria"/>
</dbReference>
<dbReference type="HOGENOM" id="CLU_2754661_0_0_3"/>
<dbReference type="OrthoDB" id="428448at2"/>
<dbReference type="Proteomes" id="UP000002715">
    <property type="component" value="Chromosome"/>
</dbReference>
<dbReference type="GO" id="GO:0009512">
    <property type="term" value="C:cytochrome b6f complex"/>
    <property type="evidence" value="ECO:0007669"/>
    <property type="project" value="InterPro"/>
</dbReference>
<dbReference type="GO" id="GO:0031676">
    <property type="term" value="C:plasma membrane-derived thylakoid membrane"/>
    <property type="evidence" value="ECO:0007669"/>
    <property type="project" value="UniProtKB-SubCell"/>
</dbReference>
<dbReference type="GO" id="GO:0045158">
    <property type="term" value="F:electron transporter, transferring electrons within cytochrome b6/f complex of photosystem II activity"/>
    <property type="evidence" value="ECO:0007669"/>
    <property type="project" value="UniProtKB-UniRule"/>
</dbReference>
<dbReference type="GO" id="GO:0017004">
    <property type="term" value="P:cytochrome complex assembly"/>
    <property type="evidence" value="ECO:0007669"/>
    <property type="project" value="UniProtKB-UniRule"/>
</dbReference>
<dbReference type="GO" id="GO:0015979">
    <property type="term" value="P:photosynthesis"/>
    <property type="evidence" value="ECO:0007669"/>
    <property type="project" value="UniProtKB-KW"/>
</dbReference>
<dbReference type="HAMAP" id="MF_00432">
    <property type="entry name" value="Cytb6_f_PetG"/>
    <property type="match status" value="1"/>
</dbReference>
<dbReference type="InterPro" id="IPR003683">
    <property type="entry name" value="Cyt_6/f_cplx_su5"/>
</dbReference>
<dbReference type="InterPro" id="IPR036099">
    <property type="entry name" value="Cyt_6/f_cplx_su5_sf"/>
</dbReference>
<dbReference type="NCBIfam" id="NF001907">
    <property type="entry name" value="PRK00665.1"/>
    <property type="match status" value="1"/>
</dbReference>
<dbReference type="Pfam" id="PF02529">
    <property type="entry name" value="PetG"/>
    <property type="match status" value="1"/>
</dbReference>
<dbReference type="PIRSF" id="PIRSF000034">
    <property type="entry name" value="Cyt_b6-f_V"/>
    <property type="match status" value="1"/>
</dbReference>
<dbReference type="SUPFAM" id="SSF103446">
    <property type="entry name" value="PetG subunit of the cytochrome b6f complex"/>
    <property type="match status" value="1"/>
</dbReference>
<name>PETG_PROM9</name>
<accession>Q31AG7</accession>
<evidence type="ECO:0000255" key="1">
    <source>
        <dbReference type="HAMAP-Rule" id="MF_00432"/>
    </source>
</evidence>
<evidence type="ECO:0000305" key="2"/>
<comment type="function">
    <text evidence="1">Component of the cytochrome b6-f complex, which mediates electron transfer between photosystem II (PSII) and photosystem I (PSI), cyclic electron flow around PSI, and state transitions. PetG is required for either the stability or assembly of the cytochrome b6-f complex.</text>
</comment>
<comment type="subunit">
    <text evidence="1">The 4 large subunits of the cytochrome b6-f complex are cytochrome b6, subunit IV (17 kDa polypeptide, PetD), cytochrome f and the Rieske protein, while the 4 small subunits are PetG, PetL, PetM and PetN. The complex functions as a dimer.</text>
</comment>
<comment type="subcellular location">
    <subcellularLocation>
        <location evidence="1">Cellular thylakoid membrane</location>
        <topology evidence="1">Single-pass membrane protein</topology>
    </subcellularLocation>
</comment>
<comment type="similarity">
    <text evidence="1">Belongs to the PetG family.</text>
</comment>
<comment type="sequence caution" evidence="2">
    <conflict type="erroneous initiation">
        <sequence resource="EMBL-CDS" id="ABB50128"/>
    </conflict>
</comment>
<organism>
    <name type="scientific">Prochlorococcus marinus (strain MIT 9312)</name>
    <dbReference type="NCBI Taxonomy" id="74546"/>
    <lineage>
        <taxon>Bacteria</taxon>
        <taxon>Bacillati</taxon>
        <taxon>Cyanobacteriota</taxon>
        <taxon>Cyanophyceae</taxon>
        <taxon>Synechococcales</taxon>
        <taxon>Prochlorococcaceae</taxon>
        <taxon>Prochlorococcus</taxon>
    </lineage>
</organism>
<protein>
    <recommendedName>
        <fullName evidence="1">Cytochrome b6-f complex subunit 5</fullName>
    </recommendedName>
    <alternativeName>
        <fullName evidence="1">Cytochrome b6-f complex subunit PetG</fullName>
    </alternativeName>
    <alternativeName>
        <fullName evidence="1">Cytochrome b6-f complex subunit V</fullName>
    </alternativeName>
</protein>
<feature type="chain" id="PRO_0000355363" description="Cytochrome b6-f complex subunit 5">
    <location>
        <begin position="1"/>
        <end position="39"/>
    </location>
</feature>
<feature type="transmembrane region" description="Helical" evidence="1">
    <location>
        <begin position="5"/>
        <end position="25"/>
    </location>
</feature>
<keyword id="KW-0249">Electron transport</keyword>
<keyword id="KW-0472">Membrane</keyword>
<keyword id="KW-0602">Photosynthesis</keyword>
<keyword id="KW-0793">Thylakoid</keyword>
<keyword id="KW-0812">Transmembrane</keyword>
<keyword id="KW-1133">Transmembrane helix</keyword>
<keyword id="KW-0813">Transport</keyword>
<reference key="1">
    <citation type="journal article" date="2006" name="Science">
        <title>Genomic islands and the ecology and evolution of Prochlorococcus.</title>
        <authorList>
            <person name="Coleman M.L."/>
            <person name="Sullivan M.B."/>
            <person name="Martiny A.C."/>
            <person name="Steglich C."/>
            <person name="Barry K."/>
            <person name="Delong E.F."/>
            <person name="Chisholm S.W."/>
        </authorList>
    </citation>
    <scope>NUCLEOTIDE SEQUENCE [LARGE SCALE GENOMIC DNA]</scope>
    <source>
        <strain>MIT 9312</strain>
    </source>
</reference>